<proteinExistence type="evidence at transcript level"/>
<organism>
    <name type="scientific">Xenopus tropicalis</name>
    <name type="common">Western clawed frog</name>
    <name type="synonym">Silurana tropicalis</name>
    <dbReference type="NCBI Taxonomy" id="8364"/>
    <lineage>
        <taxon>Eukaryota</taxon>
        <taxon>Metazoa</taxon>
        <taxon>Chordata</taxon>
        <taxon>Craniata</taxon>
        <taxon>Vertebrata</taxon>
        <taxon>Euteleostomi</taxon>
        <taxon>Amphibia</taxon>
        <taxon>Batrachia</taxon>
        <taxon>Anura</taxon>
        <taxon>Pipoidea</taxon>
        <taxon>Pipidae</taxon>
        <taxon>Xenopodinae</taxon>
        <taxon>Xenopus</taxon>
        <taxon>Silurana</taxon>
    </lineage>
</organism>
<sequence length="225" mass="25255">MADHMMAMNHSRFQDGTNGLHHPAHRMGMGQFSNHHHHPQQHTFNSLMGEHMHYGPGNINANNSIRHAIVTGNVNGGHPNGSMAPASRFNSPFMGPVPNQGAQLTASMQLQKLNNQYFTHHPYPHNHYIPELHPANQINGTNQHFRDCNPKHSTGMPPSVSHVPAAMLPPSVIDTDFIDEEVLMSLVIEMGLDRIKELPELWLGQNEFDFMTDFVCKQQPNRVSC</sequence>
<gene>
    <name type="primary">cited2</name>
    <name type="ORF">TEgg144j19.1</name>
    <name type="ORF">TNeu124g09.1</name>
</gene>
<feature type="chain" id="PRO_0000390736" description="Cbp/p300-interacting transactivator 2">
    <location>
        <begin position="1"/>
        <end position="225"/>
    </location>
</feature>
<feature type="sequence conflict" description="In Ref. 1; CAJ82068." evidence="4" ref="1">
    <original>A</original>
    <variation>G</variation>
    <location>
        <position position="165"/>
    </location>
</feature>
<name>CITE2_XENTR</name>
<reference evidence="7" key="1">
    <citation type="submission" date="2006-10" db="EMBL/GenBank/DDBJ databases">
        <authorList>
            <consortium name="Sanger Xenopus tropicalis EST/cDNA project"/>
        </authorList>
    </citation>
    <scope>NUCLEOTIDE SEQUENCE [LARGE SCALE MRNA]</scope>
    <source>
        <tissue evidence="6">Egg</tissue>
        <tissue evidence="7">Neurula</tissue>
    </source>
</reference>
<reference evidence="7" key="2">
    <citation type="submission" date="2004-03" db="EMBL/GenBank/DDBJ databases">
        <authorList>
            <consortium name="NIH - Xenopus Gene Collection (XGC) project"/>
        </authorList>
    </citation>
    <scope>NUCLEOTIDE SEQUENCE [LARGE SCALE MRNA]</scope>
    <source>
        <tissue evidence="5">Tail bud</tissue>
    </source>
</reference>
<keyword id="KW-0010">Activator</keyword>
<keyword id="KW-0217">Developmental protein</keyword>
<keyword id="KW-0221">Differentiation</keyword>
<keyword id="KW-0539">Nucleus</keyword>
<keyword id="KW-1185">Reference proteome</keyword>
<keyword id="KW-0678">Repressor</keyword>
<keyword id="KW-0804">Transcription</keyword>
<keyword id="KW-0805">Transcription regulation</keyword>
<accession>Q6NX30</accession>
<accession>Q28GT4</accession>
<comment type="function">
    <text evidence="1">Transcriptional coactivator or corepressor of the p300/CBP-mediated transcription complex. May be involved in sex determination, early gonad development, left-right patterning during embryogenesis and differentiation of the adrenal cortex (By similarity).</text>
</comment>
<comment type="subcellular location">
    <subcellularLocation>
        <location evidence="2">Nucleus</location>
    </subcellularLocation>
</comment>
<comment type="similarity">
    <text evidence="3">Belongs to the CITED family.</text>
</comment>
<evidence type="ECO:0000250" key="1"/>
<evidence type="ECO:0000250" key="2">
    <source>
        <dbReference type="UniProtKB" id="Q99967"/>
    </source>
</evidence>
<evidence type="ECO:0000255" key="3"/>
<evidence type="ECO:0000305" key="4"/>
<evidence type="ECO:0000312" key="5">
    <source>
        <dbReference type="EMBL" id="AAH67308.1"/>
    </source>
</evidence>
<evidence type="ECO:0000312" key="6">
    <source>
        <dbReference type="EMBL" id="CAJ82068.1"/>
    </source>
</evidence>
<evidence type="ECO:0000312" key="7">
    <source>
        <dbReference type="EMBL" id="CAJ82609.1"/>
    </source>
</evidence>
<protein>
    <recommendedName>
        <fullName evidence="2">Cbp/p300-interacting transactivator 2</fullName>
    </recommendedName>
</protein>
<dbReference type="EMBL" id="CR760080">
    <property type="protein sequence ID" value="CAJ82609.1"/>
    <property type="molecule type" value="mRNA"/>
</dbReference>
<dbReference type="EMBL" id="CR761235">
    <property type="protein sequence ID" value="CAJ82068.1"/>
    <property type="molecule type" value="mRNA"/>
</dbReference>
<dbReference type="EMBL" id="BC067308">
    <property type="protein sequence ID" value="AAH67308.1"/>
    <property type="molecule type" value="mRNA"/>
</dbReference>
<dbReference type="RefSeq" id="NP_001001196.1">
    <property type="nucleotide sequence ID" value="NM_001001196.1"/>
</dbReference>
<dbReference type="FunCoup" id="Q6NX30">
    <property type="interactions" value="1514"/>
</dbReference>
<dbReference type="STRING" id="8364.ENSXETP00000033647"/>
<dbReference type="PaxDb" id="8364-ENSXETP00000011639"/>
<dbReference type="GeneID" id="407853"/>
<dbReference type="KEGG" id="xtr:407853"/>
<dbReference type="AGR" id="Xenbase:XB-GENE-495035"/>
<dbReference type="CTD" id="10370"/>
<dbReference type="Xenbase" id="XB-GENE-495035">
    <property type="gene designation" value="cited2"/>
</dbReference>
<dbReference type="eggNOG" id="ENOG502QSRC">
    <property type="taxonomic scope" value="Eukaryota"/>
</dbReference>
<dbReference type="HOGENOM" id="CLU_090678_1_0_1"/>
<dbReference type="InParanoid" id="Q6NX30"/>
<dbReference type="OrthoDB" id="10025072at2759"/>
<dbReference type="TreeFam" id="TF331915"/>
<dbReference type="Proteomes" id="UP000008143">
    <property type="component" value="Chromosome 5"/>
</dbReference>
<dbReference type="Bgee" id="ENSXETG00000041066">
    <property type="expression patterns" value="Expressed in egg cell and 13 other cell types or tissues"/>
</dbReference>
<dbReference type="GO" id="GO:0005634">
    <property type="term" value="C:nucleus"/>
    <property type="evidence" value="ECO:0000250"/>
    <property type="project" value="UniProtKB"/>
</dbReference>
<dbReference type="GO" id="GO:0030154">
    <property type="term" value="P:cell differentiation"/>
    <property type="evidence" value="ECO:0007669"/>
    <property type="project" value="UniProtKB-KW"/>
</dbReference>
<dbReference type="GO" id="GO:0007368">
    <property type="term" value="P:determination of left/right symmetry"/>
    <property type="evidence" value="ECO:0000250"/>
    <property type="project" value="UniProtKB"/>
</dbReference>
<dbReference type="GO" id="GO:0007507">
    <property type="term" value="P:heart development"/>
    <property type="evidence" value="ECO:0000250"/>
    <property type="project" value="UniProtKB"/>
</dbReference>
<dbReference type="GO" id="GO:0045787">
    <property type="term" value="P:positive regulation of cell cycle"/>
    <property type="evidence" value="ECO:0000250"/>
    <property type="project" value="UniProtKB"/>
</dbReference>
<dbReference type="GO" id="GO:0045893">
    <property type="term" value="P:positive regulation of DNA-templated transcription"/>
    <property type="evidence" value="ECO:0000250"/>
    <property type="project" value="UniProtKB"/>
</dbReference>
<dbReference type="GO" id="GO:0030511">
    <property type="term" value="P:positive regulation of transforming growth factor beta receptor signaling pathway"/>
    <property type="evidence" value="ECO:0000250"/>
    <property type="project" value="UniProtKB"/>
</dbReference>
<dbReference type="FunFam" id="6.10.140.2200:FF:000001">
    <property type="entry name" value="Cbp/p300-interacting transactivator 2 isoform 1"/>
    <property type="match status" value="1"/>
</dbReference>
<dbReference type="Gene3D" id="6.10.140.2200">
    <property type="match status" value="1"/>
</dbReference>
<dbReference type="InterPro" id="IPR007576">
    <property type="entry name" value="CITED"/>
</dbReference>
<dbReference type="PANTHER" id="PTHR17045:SF7">
    <property type="entry name" value="CBP_P300-INTERACTING TRANSACTIVATOR 2"/>
    <property type="match status" value="1"/>
</dbReference>
<dbReference type="PANTHER" id="PTHR17045">
    <property type="entry name" value="MELANOCYTE SPECIFIC GENE RELATED CITED"/>
    <property type="match status" value="1"/>
</dbReference>
<dbReference type="Pfam" id="PF04487">
    <property type="entry name" value="CITED"/>
    <property type="match status" value="1"/>
</dbReference>